<feature type="chain" id="PRO_0000448756" description="Type 2 glycosyltransferase">
    <location>
        <begin position="1"/>
        <end position="471"/>
    </location>
</feature>
<feature type="transmembrane region" description="Helical" evidence="1">
    <location>
        <begin position="4"/>
        <end position="24"/>
    </location>
</feature>
<feature type="transmembrane region" description="Helical" evidence="1">
    <location>
        <begin position="305"/>
        <end position="325"/>
    </location>
</feature>
<feature type="transmembrane region" description="Helical" evidence="1">
    <location>
        <begin position="339"/>
        <end position="359"/>
    </location>
</feature>
<feature type="transmembrane region" description="Helical" evidence="1">
    <location>
        <begin position="368"/>
        <end position="388"/>
    </location>
</feature>
<feature type="glycosylation site" description="N-linked (GlcNAc...) asparagine" evidence="2">
    <location>
        <position position="29"/>
    </location>
</feature>
<feature type="glycosylation site" description="N-linked (GlcNAc...) asparagine" evidence="2">
    <location>
        <position position="88"/>
    </location>
</feature>
<feature type="glycosylation site" description="N-linked (GlcNAc...) asparagine" evidence="2">
    <location>
        <position position="222"/>
    </location>
</feature>
<feature type="glycosylation site" description="N-linked (GlcNAc...) asparagine" evidence="2">
    <location>
        <position position="458"/>
    </location>
</feature>
<accession>F9WWD1</accession>
<keyword id="KW-1003">Cell membrane</keyword>
<keyword id="KW-0325">Glycoprotein</keyword>
<keyword id="KW-0328">Glycosyltransferase</keyword>
<keyword id="KW-0472">Membrane</keyword>
<keyword id="KW-1185">Reference proteome</keyword>
<keyword id="KW-0808">Transferase</keyword>
<keyword id="KW-0812">Transmembrane</keyword>
<keyword id="KW-1133">Transmembrane helix</keyword>
<keyword id="KW-0843">Virulence</keyword>
<gene>
    <name evidence="4" type="primary">GT2</name>
    <name type="ORF">MYCGRDRAFT_65552</name>
</gene>
<reference key="1">
    <citation type="journal article" date="2011" name="PLoS Genet.">
        <title>Finished genome of the fungal wheat pathogen Mycosphaerella graminicola reveals dispensome structure, chromosome plasticity, and stealth pathogenesis.</title>
        <authorList>
            <person name="Goodwin S.B."/>
            <person name="Ben M'barek S."/>
            <person name="Dhillon B."/>
            <person name="Wittenberg A.H.J."/>
            <person name="Crane C.F."/>
            <person name="Hane J.K."/>
            <person name="Foster A.J."/>
            <person name="Van der Lee T.A.J."/>
            <person name="Grimwood J."/>
            <person name="Aerts A."/>
            <person name="Antoniw J."/>
            <person name="Bailey A."/>
            <person name="Bluhm B."/>
            <person name="Bowler J."/>
            <person name="Bristow J."/>
            <person name="van der Burgt A."/>
            <person name="Canto-Canche B."/>
            <person name="Churchill A.C.L."/>
            <person name="Conde-Ferraez L."/>
            <person name="Cools H.J."/>
            <person name="Coutinho P.M."/>
            <person name="Csukai M."/>
            <person name="Dehal P."/>
            <person name="De Wit P."/>
            <person name="Donzelli B."/>
            <person name="van de Geest H.C."/>
            <person name="van Ham R.C.H.J."/>
            <person name="Hammond-Kosack K.E."/>
            <person name="Henrissat B."/>
            <person name="Kilian A."/>
            <person name="Kobayashi A.K."/>
            <person name="Koopmann E."/>
            <person name="Kourmpetis Y."/>
            <person name="Kuzniar A."/>
            <person name="Lindquist E."/>
            <person name="Lombard V."/>
            <person name="Maliepaard C."/>
            <person name="Martins N."/>
            <person name="Mehrabi R."/>
            <person name="Nap J.P.H."/>
            <person name="Ponomarenko A."/>
            <person name="Rudd J.J."/>
            <person name="Salamov A."/>
            <person name="Schmutz J."/>
            <person name="Schouten H.J."/>
            <person name="Shapiro H."/>
            <person name="Stergiopoulos I."/>
            <person name="Torriani S.F.F."/>
            <person name="Tu H."/>
            <person name="de Vries R.P."/>
            <person name="Waalwijk C."/>
            <person name="Ware S.B."/>
            <person name="Wiebenga A."/>
            <person name="Zwiers L.-H."/>
            <person name="Oliver R.P."/>
            <person name="Grigoriev I.V."/>
            <person name="Kema G.H.J."/>
        </authorList>
    </citation>
    <scope>NUCLEOTIDE SEQUENCE [LARGE SCALE GENOMIC DNA]</scope>
    <source>
        <strain>CBS 115943 / IPO323</strain>
    </source>
</reference>
<reference key="2">
    <citation type="journal article" date="2017" name="PLoS Pathog.">
        <title>A conserved fungal glycosyltransferase facilitates pathogenesis of plants by enabling hyphal growth on solid surfaces.</title>
        <authorList>
            <person name="King R."/>
            <person name="Urban M."/>
            <person name="Lauder R.P."/>
            <person name="Hawkins N."/>
            <person name="Evans M."/>
            <person name="Plummer A."/>
            <person name="Halsey K."/>
            <person name="Lovegrove A."/>
            <person name="Hammond-Kosack K."/>
            <person name="Rudd J.J."/>
        </authorList>
    </citation>
    <scope>FUNCTION</scope>
    <scope>DISRUPTION PHENOTYPE</scope>
</reference>
<organism>
    <name type="scientific">Zymoseptoria tritici (strain CBS 115943 / IPO323)</name>
    <name type="common">Speckled leaf blotch fungus</name>
    <name type="synonym">Septoria tritici</name>
    <dbReference type="NCBI Taxonomy" id="336722"/>
    <lineage>
        <taxon>Eukaryota</taxon>
        <taxon>Fungi</taxon>
        <taxon>Dikarya</taxon>
        <taxon>Ascomycota</taxon>
        <taxon>Pezizomycotina</taxon>
        <taxon>Dothideomycetes</taxon>
        <taxon>Dothideomycetidae</taxon>
        <taxon>Mycosphaerellales</taxon>
        <taxon>Mycosphaerellaceae</taxon>
        <taxon>Zymoseptoria</taxon>
    </lineage>
</organism>
<name>GT2_ZYMTI</name>
<evidence type="ECO:0000255" key="1"/>
<evidence type="ECO:0000255" key="2">
    <source>
        <dbReference type="PROSITE-ProRule" id="PRU00498"/>
    </source>
</evidence>
<evidence type="ECO:0000269" key="3">
    <source>
    </source>
</evidence>
<evidence type="ECO:0000303" key="4">
    <source>
    </source>
</evidence>
<evidence type="ECO:0000305" key="5"/>
<evidence type="ECO:0000305" key="6">
    <source>
    </source>
</evidence>
<sequence>MLSILGWFWAFVSAFVLRYLRTIVNCISNWTYRPIPIPDNPTYGPQDVTIILPTIAQGGEELEGTLRTCLRTEPYEIILVTIDANVKNLTLLAKKINSKKIRVLSVREANKRRQMCRAIPEVSTRITIFVDDDVIWPVKLLPWILAPFENPQMGGVGTSQRRVRPEKMNAWVFLNMGYLERRNWDCSACLHIDGGLPCLSGRTAAYRTSILQDDAFTHGFTNETWRTMQLNADDDNFITRWLYSHNWKIGMQYHKEAEVLTTLEAGPKYLSQCLRWVRSNWRSNIKSMFVERHYWYTQLWTTYSCLQTTITAWALPWDAFLFYSLHKASTDWSDDSRKMAFTLLFLWIFGFTKNVKLWGHYFRYPVDVIYIPVHIAFGYFHGLIKFWGLVTLSETTWGSRDGADSSELNRIRMMPLPPYGSTTPDGRKSETFEYMQEMPLIDQLPAYDTHDRHPPLSNMTSTITTTTPFHD</sequence>
<proteinExistence type="inferred from homology"/>
<dbReference type="EC" id="2.4.1.-" evidence="6"/>
<dbReference type="EMBL" id="CM001196">
    <property type="protein sequence ID" value="EGP92529.1"/>
    <property type="molecule type" value="Genomic_DNA"/>
</dbReference>
<dbReference type="RefSeq" id="XP_003857553.1">
    <property type="nucleotide sequence ID" value="XM_003857505.1"/>
</dbReference>
<dbReference type="GlyCosmos" id="F9WWD1">
    <property type="glycosylation" value="4 sites, No reported glycans"/>
</dbReference>
<dbReference type="EnsemblFungi" id="Mycgr3T65552">
    <property type="protein sequence ID" value="Mycgr3P65552"/>
    <property type="gene ID" value="Mycgr3G65552"/>
</dbReference>
<dbReference type="GeneID" id="13394347"/>
<dbReference type="KEGG" id="ztr:MYCGRDRAFT_65552"/>
<dbReference type="VEuPathDB" id="FungiDB:ZTRI_1.565"/>
<dbReference type="eggNOG" id="ENOG502QTJK">
    <property type="taxonomic scope" value="Eukaryota"/>
</dbReference>
<dbReference type="HOGENOM" id="CLU_019940_4_1_1"/>
<dbReference type="InParanoid" id="F9WWD1"/>
<dbReference type="OMA" id="HEKHIWY"/>
<dbReference type="OrthoDB" id="3828420at2759"/>
<dbReference type="PHI-base" id="PHI:7558"/>
<dbReference type="Proteomes" id="UP000008062">
    <property type="component" value="Chromosome 1"/>
</dbReference>
<dbReference type="GO" id="GO:0030446">
    <property type="term" value="C:hyphal cell wall"/>
    <property type="evidence" value="ECO:0000269"/>
    <property type="project" value="PHI-base"/>
</dbReference>
<dbReference type="GO" id="GO:0005886">
    <property type="term" value="C:plasma membrane"/>
    <property type="evidence" value="ECO:0007669"/>
    <property type="project" value="UniProtKB-SubCell"/>
</dbReference>
<dbReference type="GO" id="GO:0016757">
    <property type="term" value="F:glycosyltransferase activity"/>
    <property type="evidence" value="ECO:0000304"/>
    <property type="project" value="PHI-base"/>
</dbReference>
<dbReference type="GO" id="GO:0030448">
    <property type="term" value="P:hyphal growth"/>
    <property type="evidence" value="ECO:0000315"/>
    <property type="project" value="PHI-base"/>
</dbReference>
<dbReference type="CDD" id="cd06434">
    <property type="entry name" value="GT2_HAS"/>
    <property type="match status" value="1"/>
</dbReference>
<dbReference type="Gene3D" id="3.90.550.10">
    <property type="entry name" value="Spore Coat Polysaccharide Biosynthesis Protein SpsA, Chain A"/>
    <property type="match status" value="1"/>
</dbReference>
<dbReference type="InterPro" id="IPR052427">
    <property type="entry name" value="Glycosyltrans_GT2/GT47"/>
</dbReference>
<dbReference type="InterPro" id="IPR029044">
    <property type="entry name" value="Nucleotide-diphossugar_trans"/>
</dbReference>
<dbReference type="PANTHER" id="PTHR47844:SF1">
    <property type="entry name" value="EXOSTOSIN-LIKE 2"/>
    <property type="match status" value="1"/>
</dbReference>
<dbReference type="PANTHER" id="PTHR47844">
    <property type="entry name" value="SYNTHASE CPS1, PUTATIVE (AFU_ORTHOLOGUE AFUA_7G02500)-RELATED"/>
    <property type="match status" value="1"/>
</dbReference>
<dbReference type="Pfam" id="PF13641">
    <property type="entry name" value="Glyco_tranf_2_3"/>
    <property type="match status" value="1"/>
</dbReference>
<dbReference type="SUPFAM" id="SSF53448">
    <property type="entry name" value="Nucleotide-diphospho-sugar transferases"/>
    <property type="match status" value="1"/>
</dbReference>
<comment type="function">
    <text evidence="3">Glycosyltransferase involved in the maintenance of the outermost surface of the fungal cell wall (PubMed:29020037). Likely functions in the synthesis of a currently unknown, potentially minor but widespread, extracellular or outer cell wall polysaccharide which plays a key role in facilitating many interactions between plants and fungi by enabling hyphal growth on solid matrices (PubMed:29020037).</text>
</comment>
<comment type="subcellular location">
    <subcellularLocation>
        <location evidence="5">Cell membrane</location>
        <topology evidence="1">Multi-pass membrane protein</topology>
    </subcellularLocation>
</comment>
<comment type="disruption phenotype">
    <text evidence="3">Severely impairs hyphal growth with filaments both shorter and growing in a sinusoidal manner (PubMed:29020037). Results in a dramatic loss of disease causing ability on wheat leaves (PubMed:29020037).</text>
</comment>
<comment type="similarity">
    <text evidence="5">Belongs to the GT2 glycosyltransferase family.</text>
</comment>
<protein>
    <recommendedName>
        <fullName evidence="4">Type 2 glycosyltransferase</fullName>
        <ecNumber evidence="6">2.4.1.-</ecNumber>
    </recommendedName>
</protein>